<protein>
    <recommendedName>
        <fullName evidence="1">Ribosomal RNA small subunit methyltransferase A</fullName>
        <ecNumber evidence="1">2.1.1.182</ecNumber>
    </recommendedName>
    <alternativeName>
        <fullName evidence="1">16S rRNA (adenine(1518)-N(6)/adenine(1519)-N(6))-dimethyltransferase</fullName>
    </alternativeName>
    <alternativeName>
        <fullName evidence="1">16S rRNA dimethyladenosine transferase</fullName>
    </alternativeName>
    <alternativeName>
        <fullName evidence="1">16S rRNA dimethylase</fullName>
    </alternativeName>
    <alternativeName>
        <fullName evidence="1">S-adenosylmethionine-6-N', N'-adenosyl(rRNA) dimethyltransferase</fullName>
    </alternativeName>
</protein>
<keyword id="KW-0963">Cytoplasm</keyword>
<keyword id="KW-0489">Methyltransferase</keyword>
<keyword id="KW-1185">Reference proteome</keyword>
<keyword id="KW-0694">RNA-binding</keyword>
<keyword id="KW-0698">rRNA processing</keyword>
<keyword id="KW-0949">S-adenosyl-L-methionine</keyword>
<keyword id="KW-0808">Transferase</keyword>
<dbReference type="EC" id="2.1.1.182" evidence="1"/>
<dbReference type="EMBL" id="AP009389">
    <property type="protein sequence ID" value="BAF58261.1"/>
    <property type="molecule type" value="Genomic_DNA"/>
</dbReference>
<dbReference type="SMR" id="A5D673"/>
<dbReference type="STRING" id="370438.PTH_0080"/>
<dbReference type="KEGG" id="pth:PTH_0080"/>
<dbReference type="eggNOG" id="COG0030">
    <property type="taxonomic scope" value="Bacteria"/>
</dbReference>
<dbReference type="HOGENOM" id="CLU_041220_0_0_9"/>
<dbReference type="Proteomes" id="UP000006556">
    <property type="component" value="Chromosome"/>
</dbReference>
<dbReference type="GO" id="GO:0005829">
    <property type="term" value="C:cytosol"/>
    <property type="evidence" value="ECO:0007669"/>
    <property type="project" value="TreeGrafter"/>
</dbReference>
<dbReference type="GO" id="GO:0052908">
    <property type="term" value="F:16S rRNA (adenine(1518)-N(6)/adenine(1519)-N(6))-dimethyltransferase activity"/>
    <property type="evidence" value="ECO:0007669"/>
    <property type="project" value="UniProtKB-EC"/>
</dbReference>
<dbReference type="GO" id="GO:0003723">
    <property type="term" value="F:RNA binding"/>
    <property type="evidence" value="ECO:0007669"/>
    <property type="project" value="UniProtKB-KW"/>
</dbReference>
<dbReference type="FunFam" id="3.40.50.150:FF:000023">
    <property type="entry name" value="Ribosomal RNA small subunit methyltransferase A"/>
    <property type="match status" value="1"/>
</dbReference>
<dbReference type="Gene3D" id="1.10.8.100">
    <property type="entry name" value="Ribosomal RNA adenine dimethylase-like, domain 2"/>
    <property type="match status" value="1"/>
</dbReference>
<dbReference type="Gene3D" id="3.40.50.150">
    <property type="entry name" value="Vaccinia Virus protein VP39"/>
    <property type="match status" value="1"/>
</dbReference>
<dbReference type="HAMAP" id="MF_00607">
    <property type="entry name" value="16SrRNA_methyltr_A"/>
    <property type="match status" value="1"/>
</dbReference>
<dbReference type="InterPro" id="IPR001737">
    <property type="entry name" value="KsgA/Erm"/>
</dbReference>
<dbReference type="InterPro" id="IPR023165">
    <property type="entry name" value="rRNA_Ade_diMease-like_C"/>
</dbReference>
<dbReference type="InterPro" id="IPR020596">
    <property type="entry name" value="rRNA_Ade_Mease_Trfase_CS"/>
</dbReference>
<dbReference type="InterPro" id="IPR020598">
    <property type="entry name" value="rRNA_Ade_methylase_Trfase_N"/>
</dbReference>
<dbReference type="InterPro" id="IPR011530">
    <property type="entry name" value="rRNA_adenine_dimethylase"/>
</dbReference>
<dbReference type="InterPro" id="IPR029063">
    <property type="entry name" value="SAM-dependent_MTases_sf"/>
</dbReference>
<dbReference type="NCBIfam" id="TIGR00755">
    <property type="entry name" value="ksgA"/>
    <property type="match status" value="1"/>
</dbReference>
<dbReference type="PANTHER" id="PTHR11727">
    <property type="entry name" value="DIMETHYLADENOSINE TRANSFERASE"/>
    <property type="match status" value="1"/>
</dbReference>
<dbReference type="PANTHER" id="PTHR11727:SF7">
    <property type="entry name" value="DIMETHYLADENOSINE TRANSFERASE-RELATED"/>
    <property type="match status" value="1"/>
</dbReference>
<dbReference type="Pfam" id="PF00398">
    <property type="entry name" value="RrnaAD"/>
    <property type="match status" value="1"/>
</dbReference>
<dbReference type="SMART" id="SM00650">
    <property type="entry name" value="rADc"/>
    <property type="match status" value="1"/>
</dbReference>
<dbReference type="SUPFAM" id="SSF53335">
    <property type="entry name" value="S-adenosyl-L-methionine-dependent methyltransferases"/>
    <property type="match status" value="1"/>
</dbReference>
<dbReference type="PROSITE" id="PS01131">
    <property type="entry name" value="RRNA_A_DIMETH"/>
    <property type="match status" value="1"/>
</dbReference>
<dbReference type="PROSITE" id="PS51689">
    <property type="entry name" value="SAM_RNA_A_N6_MT"/>
    <property type="match status" value="1"/>
</dbReference>
<organism>
    <name type="scientific">Pelotomaculum thermopropionicum (strain DSM 13744 / JCM 10971 / SI)</name>
    <dbReference type="NCBI Taxonomy" id="370438"/>
    <lineage>
        <taxon>Bacteria</taxon>
        <taxon>Bacillati</taxon>
        <taxon>Bacillota</taxon>
        <taxon>Clostridia</taxon>
        <taxon>Eubacteriales</taxon>
        <taxon>Desulfotomaculaceae</taxon>
        <taxon>Pelotomaculum</taxon>
    </lineage>
</organism>
<sequence>MIVVASPAVVREIMRRHGISPRKSLGQNFLIDLNIIDKIIKAADLTPADLVVEIGPGLGALTARAAARAGKVLAVEVDRGLLPALAEVLEGAGNVEIIRGDALDVDFDRLAGEKTDGAFGRGGKKYKLLANLPYYLTGPLLLRLLLERFNFALMVVMVQLEVAFRLTASPGTADYGALSVAVQYFTEPKVLFRVPRTVFYPPPGVDSAVVRLALRPAPAVTVRNEDVFFQVVRAAFGFRRKTLLNSLAASGLGPGREAWLEVLKRAGIDPQRRGETLSLSEFASIADSFLDAGGQ</sequence>
<feature type="chain" id="PRO_1000082557" description="Ribosomal RNA small subunit methyltransferase A">
    <location>
        <begin position="1"/>
        <end position="295"/>
    </location>
</feature>
<feature type="binding site" evidence="1">
    <location>
        <position position="28"/>
    </location>
    <ligand>
        <name>S-adenosyl-L-methionine</name>
        <dbReference type="ChEBI" id="CHEBI:59789"/>
    </ligand>
</feature>
<feature type="binding site" evidence="1">
    <location>
        <position position="30"/>
    </location>
    <ligand>
        <name>S-adenosyl-L-methionine</name>
        <dbReference type="ChEBI" id="CHEBI:59789"/>
    </ligand>
</feature>
<feature type="binding site" evidence="1">
    <location>
        <position position="55"/>
    </location>
    <ligand>
        <name>S-adenosyl-L-methionine</name>
        <dbReference type="ChEBI" id="CHEBI:59789"/>
    </ligand>
</feature>
<feature type="binding site" evidence="1">
    <location>
        <position position="76"/>
    </location>
    <ligand>
        <name>S-adenosyl-L-methionine</name>
        <dbReference type="ChEBI" id="CHEBI:59789"/>
    </ligand>
</feature>
<feature type="binding site" evidence="1">
    <location>
        <position position="101"/>
    </location>
    <ligand>
        <name>S-adenosyl-L-methionine</name>
        <dbReference type="ChEBI" id="CHEBI:59789"/>
    </ligand>
</feature>
<feature type="binding site" evidence="1">
    <location>
        <position position="131"/>
    </location>
    <ligand>
        <name>S-adenosyl-L-methionine</name>
        <dbReference type="ChEBI" id="CHEBI:59789"/>
    </ligand>
</feature>
<reference key="1">
    <citation type="journal article" date="2008" name="Genome Res.">
        <title>The genome of Pelotomaculum thermopropionicum reveals niche-associated evolution in anaerobic microbiota.</title>
        <authorList>
            <person name="Kosaka T."/>
            <person name="Kato S."/>
            <person name="Shimoyama T."/>
            <person name="Ishii S."/>
            <person name="Abe T."/>
            <person name="Watanabe K."/>
        </authorList>
    </citation>
    <scope>NUCLEOTIDE SEQUENCE [LARGE SCALE GENOMIC DNA]</scope>
    <source>
        <strain>DSM 13744 / JCM 10971 / SI</strain>
    </source>
</reference>
<comment type="function">
    <text evidence="1">Specifically dimethylates two adjacent adenosines (A1518 and A1519) in the loop of a conserved hairpin near the 3'-end of 16S rRNA in the 30S particle. May play a critical role in biogenesis of 30S subunits.</text>
</comment>
<comment type="catalytic activity">
    <reaction evidence="1">
        <text>adenosine(1518)/adenosine(1519) in 16S rRNA + 4 S-adenosyl-L-methionine = N(6)-dimethyladenosine(1518)/N(6)-dimethyladenosine(1519) in 16S rRNA + 4 S-adenosyl-L-homocysteine + 4 H(+)</text>
        <dbReference type="Rhea" id="RHEA:19609"/>
        <dbReference type="Rhea" id="RHEA-COMP:10232"/>
        <dbReference type="Rhea" id="RHEA-COMP:10233"/>
        <dbReference type="ChEBI" id="CHEBI:15378"/>
        <dbReference type="ChEBI" id="CHEBI:57856"/>
        <dbReference type="ChEBI" id="CHEBI:59789"/>
        <dbReference type="ChEBI" id="CHEBI:74411"/>
        <dbReference type="ChEBI" id="CHEBI:74493"/>
        <dbReference type="EC" id="2.1.1.182"/>
    </reaction>
</comment>
<comment type="subcellular location">
    <subcellularLocation>
        <location evidence="1">Cytoplasm</location>
    </subcellularLocation>
</comment>
<comment type="similarity">
    <text evidence="1">Belongs to the class I-like SAM-binding methyltransferase superfamily. rRNA adenine N(6)-methyltransferase family. RsmA subfamily.</text>
</comment>
<evidence type="ECO:0000255" key="1">
    <source>
        <dbReference type="HAMAP-Rule" id="MF_00607"/>
    </source>
</evidence>
<proteinExistence type="inferred from homology"/>
<accession>A5D673</accession>
<gene>
    <name evidence="1" type="primary">rsmA</name>
    <name evidence="1" type="synonym">ksgA</name>
    <name type="ordered locus">PTH_0080</name>
</gene>
<name>RSMA_PELTS</name>